<evidence type="ECO:0000250" key="1">
    <source>
        <dbReference type="UniProtKB" id="C0HLB3"/>
    </source>
</evidence>
<evidence type="ECO:0000250" key="2">
    <source>
        <dbReference type="UniProtKB" id="P23956"/>
    </source>
</evidence>
<evidence type="ECO:0000250" key="3">
    <source>
        <dbReference type="UniProtKB" id="P63081"/>
    </source>
</evidence>
<evidence type="ECO:0000255" key="4"/>
<evidence type="ECO:0000305" key="5"/>
<evidence type="ECO:0000312" key="6">
    <source>
        <dbReference type="WormBase" id="CBG10000"/>
    </source>
</evidence>
<proteinExistence type="inferred from homology"/>
<reference key="1">
    <citation type="journal article" date="2003" name="PLoS Biol.">
        <title>The genome sequence of Caenorhabditis briggsae: a platform for comparative genomics.</title>
        <authorList>
            <person name="Stein L.D."/>
            <person name="Bao Z."/>
            <person name="Blasiar D."/>
            <person name="Blumenthal T."/>
            <person name="Brent M.R."/>
            <person name="Chen N."/>
            <person name="Chinwalla A."/>
            <person name="Clarke L."/>
            <person name="Clee C."/>
            <person name="Coghlan A."/>
            <person name="Coulson A."/>
            <person name="D'Eustachio P."/>
            <person name="Fitch D.H.A."/>
            <person name="Fulton L.A."/>
            <person name="Fulton R.E."/>
            <person name="Griffiths-Jones S."/>
            <person name="Harris T.W."/>
            <person name="Hillier L.W."/>
            <person name="Kamath R."/>
            <person name="Kuwabara P.E."/>
            <person name="Mardis E.R."/>
            <person name="Marra M.A."/>
            <person name="Miner T.L."/>
            <person name="Minx P."/>
            <person name="Mullikin J.C."/>
            <person name="Plumb R.W."/>
            <person name="Rogers J."/>
            <person name="Schein J.E."/>
            <person name="Sohrmann M."/>
            <person name="Spieth J."/>
            <person name="Stajich J.E."/>
            <person name="Wei C."/>
            <person name="Willey D."/>
            <person name="Wilson R.K."/>
            <person name="Durbin R.M."/>
            <person name="Waterston R.H."/>
        </authorList>
    </citation>
    <scope>NUCLEOTIDE SEQUENCE [LARGE SCALE GENOMIC DNA]</scope>
    <source>
        <strain>AF16</strain>
    </source>
</reference>
<keyword id="KW-0375">Hydrogen ion transport</keyword>
<keyword id="KW-0406">Ion transport</keyword>
<keyword id="KW-0472">Membrane</keyword>
<keyword id="KW-1210">Necrosis</keyword>
<keyword id="KW-1185">Reference proteome</keyword>
<keyword id="KW-0812">Transmembrane</keyword>
<keyword id="KW-1133">Transmembrane helix</keyword>
<keyword id="KW-0813">Transport</keyword>
<protein>
    <recommendedName>
        <fullName evidence="5">V-type proton ATPase 16 kDa proteolipid subunit c 2</fullName>
        <shortName evidence="5">V-ATPase 16 kDa proteolipid subunit c 2</shortName>
    </recommendedName>
    <alternativeName>
        <fullName evidence="5">Vacuolar proton pump 16 kDa proteolipid subunit c 2</fullName>
    </alternativeName>
</protein>
<accession>C0HLB5</accession>
<accession>A8XA51</accession>
<accession>Q612A5</accession>
<gene>
    <name evidence="6" type="ORF">CBG10000</name>
</gene>
<feature type="chain" id="PRO_0000278181" description="V-type proton ATPase 16 kDa proteolipid subunit c 2">
    <location>
        <begin position="1"/>
        <end position="161"/>
    </location>
</feature>
<feature type="topological domain" description="Lumenal" evidence="4">
    <location>
        <begin position="1"/>
        <end position="15"/>
    </location>
</feature>
<feature type="transmembrane region" description="Helical" evidence="4">
    <location>
        <begin position="16"/>
        <end position="36"/>
    </location>
</feature>
<feature type="topological domain" description="Cytoplasmic" evidence="4">
    <location>
        <begin position="37"/>
        <end position="58"/>
    </location>
</feature>
<feature type="transmembrane region" description="Helical" evidence="4">
    <location>
        <begin position="59"/>
        <end position="79"/>
    </location>
</feature>
<feature type="topological domain" description="Lumenal" evidence="4">
    <location>
        <begin position="80"/>
        <end position="98"/>
    </location>
</feature>
<feature type="transmembrane region" description="Helical" evidence="4">
    <location>
        <begin position="99"/>
        <end position="119"/>
    </location>
</feature>
<feature type="topological domain" description="Cytoplasmic" evidence="4">
    <location>
        <begin position="120"/>
        <end position="137"/>
    </location>
</feature>
<feature type="transmembrane region" description="Helical" evidence="4">
    <location>
        <begin position="138"/>
        <end position="158"/>
    </location>
</feature>
<feature type="topological domain" description="Lumenal" evidence="4">
    <location>
        <begin position="159"/>
        <end position="161"/>
    </location>
</feature>
<feature type="site" description="Essential for proton translocation" evidence="3">
    <location>
        <position position="145"/>
    </location>
</feature>
<comment type="function">
    <text evidence="1 2">Proton-conducting pore forming subunit of the V0 complex of vacuolar(H+)-ATPase (V-ATPase), a multisubunit enzyme composed of a peripheral complex (V1) that hydrolyzes ATP and a membrane integral complex (V0) that translocates protons. V-ATPase is responsible for acidifying and maintaining the pH of intracellular compartments and in some cell types, is targeted to the plasma membrane, where it is responsible for acidifying the extracellular environment (By similarity). Involved in necrotic cell death. Required along with other vacuolar ATPase components for the removal of protein aggregates which form in immature oocytes in the distal gonad. This removal occurs as the oocytes mature and move to the proximal gonad, is triggered by the introduction of sperm through mating and occurs before fertilization. The introduction of sperm triggers V-ATPase accumulation in proximal oocytes and induces lysosomal acidification which leads to engulfing of protein aggregates by lysosomes and subsequent clearance of the aggregates. Lysosomal acidification also leads to changes in mitochondrial morphology and function. Mitochondria in distal immature oocytes are fragmented, produce high levels of reactive oxygen species (ROS) and have high membrane potential, indicative of metabolic inactivity. In contrast, mitochondria in proximal mature oocytes are tubular with lower ROS levels and membrane potential, indicative of an active metabolic state required for aggregate mobilization before clearance (By similarity).</text>
</comment>
<comment type="subunit">
    <text evidence="2">V-ATPase is a heteromultimeric enzyme made up of two complexes: the ATP-hydrolytic V1 complex and the proton translocation V0 complex (By similarity). The V1 complex consists of three catalytic AB heterodimers that form a heterohexamer, three peripheral stalks each consisting of EG heterodimers, one central rotor including subunits D and F, and the regulatory subunits C and H (By similarity). The proton translocation complex V0 consists of the proton transport subunit a, a ring of proteolipid subunits c9c'', rotary subunit d, subunits e and f, and the accessory subunits vah-19/Ac45 and vah-20/PRR (By similarity).</text>
</comment>
<comment type="subcellular location">
    <subcellularLocation>
        <location evidence="4">Membrane</location>
        <topology evidence="4">Multi-pass membrane protein</topology>
    </subcellularLocation>
</comment>
<comment type="similarity">
    <text evidence="4">Belongs to the V-ATPase proteolipid subunit family.</text>
</comment>
<name>VATL2_CAEBR</name>
<sequence>MSYDLETAEHAAYAPFFGYMGAASAQIFTVLGAAYGTAKSAVGICSMGVMRPELIMKSVIPVIMAGIIGIYGLVVAMVLKGKVQAASAGYDLNKGFAHLAAGLTCGLCGLGAGYAIGIVGDAGVRGTAQQPRLFVGMILILIFSEVLGLYGMIVALILGTS</sequence>
<organism>
    <name type="scientific">Caenorhabditis briggsae</name>
    <dbReference type="NCBI Taxonomy" id="6238"/>
    <lineage>
        <taxon>Eukaryota</taxon>
        <taxon>Metazoa</taxon>
        <taxon>Ecdysozoa</taxon>
        <taxon>Nematoda</taxon>
        <taxon>Chromadorea</taxon>
        <taxon>Rhabditida</taxon>
        <taxon>Rhabditina</taxon>
        <taxon>Rhabditomorpha</taxon>
        <taxon>Rhabditoidea</taxon>
        <taxon>Rhabditidae</taxon>
        <taxon>Peloderinae</taxon>
        <taxon>Caenorhabditis</taxon>
    </lineage>
</organism>
<dbReference type="EMBL" id="HE601459">
    <property type="protein sequence ID" value="CAP29519.1"/>
    <property type="molecule type" value="Genomic_DNA"/>
</dbReference>
<dbReference type="RefSeq" id="XP_002641670.1">
    <property type="nucleotide sequence ID" value="XM_002641624.1"/>
</dbReference>
<dbReference type="SMR" id="C0HLB5"/>
<dbReference type="FunCoup" id="C0HLB5">
    <property type="interactions" value="2063"/>
</dbReference>
<dbReference type="STRING" id="6238.C0HLB5"/>
<dbReference type="EnsemblMetazoa" id="CBG10000.1">
    <property type="protein sequence ID" value="CBG10000.1"/>
    <property type="gene ID" value="WBGene00031488"/>
</dbReference>
<dbReference type="EnsemblMetazoa" id="CBG16825.1">
    <property type="protein sequence ID" value="CBG16825.1"/>
    <property type="gene ID" value="WBGene00036658"/>
</dbReference>
<dbReference type="GeneID" id="8583664"/>
<dbReference type="KEGG" id="cbr:CBG_10000"/>
<dbReference type="KEGG" id="cbr:CBG_16825"/>
<dbReference type="CTD" id="8583664"/>
<dbReference type="CTD" id="8587129"/>
<dbReference type="WormBase" id="CBG10000">
    <property type="protein sequence ID" value="CBP10352"/>
    <property type="gene ID" value="WBGene00031488"/>
</dbReference>
<dbReference type="InParanoid" id="C0HLB5"/>
<dbReference type="OMA" id="MGVMKPD"/>
<dbReference type="OrthoDB" id="1744869at2759"/>
<dbReference type="Proteomes" id="UP000008549">
    <property type="component" value="Unassembled WGS sequence"/>
</dbReference>
<dbReference type="GO" id="GO:0016020">
    <property type="term" value="C:membrane"/>
    <property type="evidence" value="ECO:0000318"/>
    <property type="project" value="GO_Central"/>
</dbReference>
<dbReference type="GO" id="GO:0033179">
    <property type="term" value="C:proton-transporting V-type ATPase, V0 domain"/>
    <property type="evidence" value="ECO:0007669"/>
    <property type="project" value="InterPro"/>
</dbReference>
<dbReference type="GO" id="GO:0046961">
    <property type="term" value="F:proton-transporting ATPase activity, rotational mechanism"/>
    <property type="evidence" value="ECO:0007669"/>
    <property type="project" value="InterPro"/>
</dbReference>
<dbReference type="GO" id="GO:0007042">
    <property type="term" value="P:lysosomal lumen acidification"/>
    <property type="evidence" value="ECO:0000250"/>
    <property type="project" value="UniProtKB"/>
</dbReference>
<dbReference type="GO" id="GO:0070266">
    <property type="term" value="P:necroptotic process"/>
    <property type="evidence" value="ECO:0007669"/>
    <property type="project" value="EnsemblMetazoa"/>
</dbReference>
<dbReference type="CDD" id="cd18175">
    <property type="entry name" value="ATP-synt_Vo_c_ATP6C_rpt1"/>
    <property type="match status" value="1"/>
</dbReference>
<dbReference type="CDD" id="cd18176">
    <property type="entry name" value="ATP-synt_Vo_c_ATP6C_rpt2"/>
    <property type="match status" value="1"/>
</dbReference>
<dbReference type="FunFam" id="1.20.120.610:FF:000001">
    <property type="entry name" value="V-type proton ATPase proteolipid subunit"/>
    <property type="match status" value="1"/>
</dbReference>
<dbReference type="Gene3D" id="1.20.120.610">
    <property type="entry name" value="lithium bound rotor ring of v- atpase"/>
    <property type="match status" value="1"/>
</dbReference>
<dbReference type="InterPro" id="IPR002379">
    <property type="entry name" value="ATPase_proteolipid_c-like_dom"/>
</dbReference>
<dbReference type="InterPro" id="IPR000245">
    <property type="entry name" value="ATPase_proteolipid_csu"/>
</dbReference>
<dbReference type="InterPro" id="IPR011555">
    <property type="entry name" value="ATPase_proteolipid_su_C_euk"/>
</dbReference>
<dbReference type="InterPro" id="IPR035921">
    <property type="entry name" value="F/V-ATP_Csub_sf"/>
</dbReference>
<dbReference type="NCBIfam" id="TIGR01100">
    <property type="entry name" value="V_ATP_synt_C"/>
    <property type="match status" value="1"/>
</dbReference>
<dbReference type="PANTHER" id="PTHR10263">
    <property type="entry name" value="V-TYPE PROTON ATPASE PROTEOLIPID SUBUNIT"/>
    <property type="match status" value="1"/>
</dbReference>
<dbReference type="Pfam" id="PF00137">
    <property type="entry name" value="ATP-synt_C"/>
    <property type="match status" value="2"/>
</dbReference>
<dbReference type="PRINTS" id="PR00122">
    <property type="entry name" value="VACATPASE"/>
</dbReference>
<dbReference type="SUPFAM" id="SSF81333">
    <property type="entry name" value="F1F0 ATP synthase subunit C"/>
    <property type="match status" value="2"/>
</dbReference>